<comment type="function">
    <text evidence="1">Catalyzes the 2-thiolation of uridine at the wobble position (U34) of tRNA(Lys), tRNA(Glu) and tRNA(Gln), leading to the formation of s(2)U34, the first step of tRNA-mnm(5)s(2)U34 synthesis. Sulfur is provided by IscS, via a sulfur-relay system. Binds ATP and its substrate tRNAs.</text>
</comment>
<comment type="catalytic activity">
    <reaction evidence="1">
        <text>S-sulfanyl-L-cysteinyl-[protein] + uridine(34) in tRNA + AH2 + ATP = 2-thiouridine(34) in tRNA + L-cysteinyl-[protein] + A + AMP + diphosphate + H(+)</text>
        <dbReference type="Rhea" id="RHEA:47032"/>
        <dbReference type="Rhea" id="RHEA-COMP:10131"/>
        <dbReference type="Rhea" id="RHEA-COMP:11726"/>
        <dbReference type="Rhea" id="RHEA-COMP:11727"/>
        <dbReference type="Rhea" id="RHEA-COMP:11728"/>
        <dbReference type="ChEBI" id="CHEBI:13193"/>
        <dbReference type="ChEBI" id="CHEBI:15378"/>
        <dbReference type="ChEBI" id="CHEBI:17499"/>
        <dbReference type="ChEBI" id="CHEBI:29950"/>
        <dbReference type="ChEBI" id="CHEBI:30616"/>
        <dbReference type="ChEBI" id="CHEBI:33019"/>
        <dbReference type="ChEBI" id="CHEBI:61963"/>
        <dbReference type="ChEBI" id="CHEBI:65315"/>
        <dbReference type="ChEBI" id="CHEBI:87170"/>
        <dbReference type="ChEBI" id="CHEBI:456215"/>
        <dbReference type="EC" id="2.8.1.13"/>
    </reaction>
</comment>
<comment type="subunit">
    <text evidence="1">Interacts with TusE.</text>
</comment>
<comment type="subcellular location">
    <subcellularLocation>
        <location evidence="1">Cytoplasm</location>
    </subcellularLocation>
</comment>
<comment type="similarity">
    <text evidence="1">Belongs to the MnmA/TRMU family.</text>
</comment>
<name>MNMA_KLEP3</name>
<evidence type="ECO:0000255" key="1">
    <source>
        <dbReference type="HAMAP-Rule" id="MF_00144"/>
    </source>
</evidence>
<dbReference type="EC" id="2.8.1.13" evidence="1"/>
<dbReference type="EMBL" id="CP000964">
    <property type="protein sequence ID" value="ACI07780.1"/>
    <property type="molecule type" value="Genomic_DNA"/>
</dbReference>
<dbReference type="SMR" id="B5XSN3"/>
<dbReference type="KEGG" id="kpe:KPK_3410"/>
<dbReference type="HOGENOM" id="CLU_035188_1_0_6"/>
<dbReference type="Proteomes" id="UP000001734">
    <property type="component" value="Chromosome"/>
</dbReference>
<dbReference type="GO" id="GO:0005737">
    <property type="term" value="C:cytoplasm"/>
    <property type="evidence" value="ECO:0007669"/>
    <property type="project" value="UniProtKB-SubCell"/>
</dbReference>
<dbReference type="GO" id="GO:0005524">
    <property type="term" value="F:ATP binding"/>
    <property type="evidence" value="ECO:0007669"/>
    <property type="project" value="UniProtKB-KW"/>
</dbReference>
<dbReference type="GO" id="GO:0000049">
    <property type="term" value="F:tRNA binding"/>
    <property type="evidence" value="ECO:0007669"/>
    <property type="project" value="UniProtKB-KW"/>
</dbReference>
<dbReference type="GO" id="GO:0103016">
    <property type="term" value="F:tRNA-uridine 2-sulfurtransferase activity"/>
    <property type="evidence" value="ECO:0007669"/>
    <property type="project" value="UniProtKB-EC"/>
</dbReference>
<dbReference type="GO" id="GO:0002143">
    <property type="term" value="P:tRNA wobble position uridine thiolation"/>
    <property type="evidence" value="ECO:0007669"/>
    <property type="project" value="TreeGrafter"/>
</dbReference>
<dbReference type="CDD" id="cd01998">
    <property type="entry name" value="MnmA_TRMU-like"/>
    <property type="match status" value="1"/>
</dbReference>
<dbReference type="FunFam" id="2.30.30.280:FF:000001">
    <property type="entry name" value="tRNA-specific 2-thiouridylase MnmA"/>
    <property type="match status" value="1"/>
</dbReference>
<dbReference type="FunFam" id="2.40.30.10:FF:000023">
    <property type="entry name" value="tRNA-specific 2-thiouridylase MnmA"/>
    <property type="match status" value="1"/>
</dbReference>
<dbReference type="FunFam" id="3.40.50.620:FF:000004">
    <property type="entry name" value="tRNA-specific 2-thiouridylase MnmA"/>
    <property type="match status" value="1"/>
</dbReference>
<dbReference type="Gene3D" id="2.30.30.280">
    <property type="entry name" value="Adenine nucleotide alpha hydrolases-like domains"/>
    <property type="match status" value="1"/>
</dbReference>
<dbReference type="Gene3D" id="3.40.50.620">
    <property type="entry name" value="HUPs"/>
    <property type="match status" value="1"/>
</dbReference>
<dbReference type="Gene3D" id="2.40.30.10">
    <property type="entry name" value="Translation factors"/>
    <property type="match status" value="1"/>
</dbReference>
<dbReference type="HAMAP" id="MF_00144">
    <property type="entry name" value="tRNA_thiouridyl_MnmA"/>
    <property type="match status" value="1"/>
</dbReference>
<dbReference type="InterPro" id="IPR004506">
    <property type="entry name" value="MnmA-like"/>
</dbReference>
<dbReference type="InterPro" id="IPR046885">
    <property type="entry name" value="MnmA-like_C"/>
</dbReference>
<dbReference type="InterPro" id="IPR046884">
    <property type="entry name" value="MnmA-like_central"/>
</dbReference>
<dbReference type="InterPro" id="IPR023382">
    <property type="entry name" value="MnmA-like_central_sf"/>
</dbReference>
<dbReference type="InterPro" id="IPR014729">
    <property type="entry name" value="Rossmann-like_a/b/a_fold"/>
</dbReference>
<dbReference type="NCBIfam" id="NF001138">
    <property type="entry name" value="PRK00143.1"/>
    <property type="match status" value="1"/>
</dbReference>
<dbReference type="NCBIfam" id="TIGR00420">
    <property type="entry name" value="trmU"/>
    <property type="match status" value="1"/>
</dbReference>
<dbReference type="PANTHER" id="PTHR11933:SF5">
    <property type="entry name" value="MITOCHONDRIAL TRNA-SPECIFIC 2-THIOURIDYLASE 1"/>
    <property type="match status" value="1"/>
</dbReference>
<dbReference type="PANTHER" id="PTHR11933">
    <property type="entry name" value="TRNA 5-METHYLAMINOMETHYL-2-THIOURIDYLATE -METHYLTRANSFERASE"/>
    <property type="match status" value="1"/>
</dbReference>
<dbReference type="Pfam" id="PF03054">
    <property type="entry name" value="tRNA_Me_trans"/>
    <property type="match status" value="1"/>
</dbReference>
<dbReference type="Pfam" id="PF20258">
    <property type="entry name" value="tRNA_Me_trans_C"/>
    <property type="match status" value="1"/>
</dbReference>
<dbReference type="Pfam" id="PF20259">
    <property type="entry name" value="tRNA_Me_trans_M"/>
    <property type="match status" value="1"/>
</dbReference>
<dbReference type="SUPFAM" id="SSF52402">
    <property type="entry name" value="Adenine nucleotide alpha hydrolases-like"/>
    <property type="match status" value="1"/>
</dbReference>
<gene>
    <name evidence="1" type="primary">mnmA</name>
    <name type="ordered locus">KPK_3410</name>
</gene>
<protein>
    <recommendedName>
        <fullName evidence="1">tRNA-specific 2-thiouridylase MnmA</fullName>
        <ecNumber evidence="1">2.8.1.13</ecNumber>
    </recommendedName>
</protein>
<accession>B5XSN3</accession>
<feature type="chain" id="PRO_1000096294" description="tRNA-specific 2-thiouridylase MnmA">
    <location>
        <begin position="1"/>
        <end position="368"/>
    </location>
</feature>
<feature type="region of interest" description="Interaction with target base in tRNA" evidence="1">
    <location>
        <begin position="97"/>
        <end position="99"/>
    </location>
</feature>
<feature type="region of interest" description="Interaction with tRNA" evidence="1">
    <location>
        <begin position="149"/>
        <end position="151"/>
    </location>
</feature>
<feature type="region of interest" description="Interaction with tRNA" evidence="1">
    <location>
        <begin position="311"/>
        <end position="312"/>
    </location>
</feature>
<feature type="active site" description="Nucleophile" evidence="1">
    <location>
        <position position="102"/>
    </location>
</feature>
<feature type="active site" description="Cysteine persulfide intermediate" evidence="1">
    <location>
        <position position="199"/>
    </location>
</feature>
<feature type="binding site" evidence="1">
    <location>
        <begin position="11"/>
        <end position="18"/>
    </location>
    <ligand>
        <name>ATP</name>
        <dbReference type="ChEBI" id="CHEBI:30616"/>
    </ligand>
</feature>
<feature type="binding site" evidence="1">
    <location>
        <position position="37"/>
    </location>
    <ligand>
        <name>ATP</name>
        <dbReference type="ChEBI" id="CHEBI:30616"/>
    </ligand>
</feature>
<feature type="binding site" evidence="1">
    <location>
        <position position="127"/>
    </location>
    <ligand>
        <name>ATP</name>
        <dbReference type="ChEBI" id="CHEBI:30616"/>
    </ligand>
</feature>
<feature type="site" description="Interaction with tRNA" evidence="1">
    <location>
        <position position="128"/>
    </location>
</feature>
<feature type="site" description="Interaction with tRNA" evidence="1">
    <location>
        <position position="344"/>
    </location>
</feature>
<feature type="disulfide bond" description="Alternate" evidence="1">
    <location>
        <begin position="102"/>
        <end position="199"/>
    </location>
</feature>
<proteinExistence type="inferred from homology"/>
<keyword id="KW-0067">ATP-binding</keyword>
<keyword id="KW-0963">Cytoplasm</keyword>
<keyword id="KW-1015">Disulfide bond</keyword>
<keyword id="KW-0547">Nucleotide-binding</keyword>
<keyword id="KW-0694">RNA-binding</keyword>
<keyword id="KW-0808">Transferase</keyword>
<keyword id="KW-0819">tRNA processing</keyword>
<keyword id="KW-0820">tRNA-binding</keyword>
<reference key="1">
    <citation type="journal article" date="2008" name="PLoS Genet.">
        <title>Complete genome sequence of the N2-fixing broad host range endophyte Klebsiella pneumoniae 342 and virulence predictions verified in mice.</title>
        <authorList>
            <person name="Fouts D.E."/>
            <person name="Tyler H.L."/>
            <person name="DeBoy R.T."/>
            <person name="Daugherty S."/>
            <person name="Ren Q."/>
            <person name="Badger J.H."/>
            <person name="Durkin A.S."/>
            <person name="Huot H."/>
            <person name="Shrivastava S."/>
            <person name="Kothari S."/>
            <person name="Dodson R.J."/>
            <person name="Mohamoud Y."/>
            <person name="Khouri H."/>
            <person name="Roesch L.F.W."/>
            <person name="Krogfelt K.A."/>
            <person name="Struve C."/>
            <person name="Triplett E.W."/>
            <person name="Methe B.A."/>
        </authorList>
    </citation>
    <scope>NUCLEOTIDE SEQUENCE [LARGE SCALE GENOMIC DNA]</scope>
    <source>
        <strain>342</strain>
    </source>
</reference>
<organism>
    <name type="scientific">Klebsiella pneumoniae (strain 342)</name>
    <dbReference type="NCBI Taxonomy" id="507522"/>
    <lineage>
        <taxon>Bacteria</taxon>
        <taxon>Pseudomonadati</taxon>
        <taxon>Pseudomonadota</taxon>
        <taxon>Gammaproteobacteria</taxon>
        <taxon>Enterobacterales</taxon>
        <taxon>Enterobacteriaceae</taxon>
        <taxon>Klebsiella/Raoultella group</taxon>
        <taxon>Klebsiella</taxon>
        <taxon>Klebsiella pneumoniae complex</taxon>
    </lineage>
</organism>
<sequence>MSESQKKVIVGMSGGVDSSVSAYLLLQQGYKVEGLFMKNWEEDDGEEYCTAAADLADAQAVCDKLGIELHTVNFAAEYWDNVFELFLEEYKAGRTPNPDILCNKEIKFKAFLEFAAEDLGADYIATGHYVRRADVDGKSQLLRGLDGNKDQSYFLYTLSHEQIAQSLFPVGELEKPQVRKIAEELDLITAKKKDSTGICFIGERKFRDFLGRYLPAQPGKILTVDGEEIGTHQGLMYHTLGQRKGLGIGGTKEGSEDPWYVVDKDVENNILIVAQGHDHPRLMSVGLIAQQLHWVDREPLQGTLRCTVKTRYRQTDIPCTVTALDEDRIEVRFDEPVAAVTPGQSAVFYLGEVCLGGGIIEQRLPLQS</sequence>